<dbReference type="EC" id="4.2.1.1" evidence="2"/>
<dbReference type="EMBL" id="BX548174">
    <property type="protein sequence ID" value="CAE19012.1"/>
    <property type="molecule type" value="Genomic_DNA"/>
</dbReference>
<dbReference type="RefSeq" id="WP_011132187.1">
    <property type="nucleotide sequence ID" value="NC_005072.1"/>
</dbReference>
<dbReference type="SMR" id="Q7V2C7"/>
<dbReference type="STRING" id="59919.PMM0553"/>
<dbReference type="KEGG" id="pmm:PMM0553"/>
<dbReference type="eggNOG" id="ENOG502Z9V7">
    <property type="taxonomic scope" value="Bacteria"/>
</dbReference>
<dbReference type="HOGENOM" id="CLU_535194_0_0_3"/>
<dbReference type="OrthoDB" id="544846at2"/>
<dbReference type="Proteomes" id="UP000001026">
    <property type="component" value="Chromosome"/>
</dbReference>
<dbReference type="GO" id="GO:0031470">
    <property type="term" value="C:carboxysome"/>
    <property type="evidence" value="ECO:0007669"/>
    <property type="project" value="UniProtKB-SubCell"/>
</dbReference>
<dbReference type="GO" id="GO:0004089">
    <property type="term" value="F:carbonate dehydratase activity"/>
    <property type="evidence" value="ECO:0007669"/>
    <property type="project" value="UniProtKB-EC"/>
</dbReference>
<dbReference type="GO" id="GO:0046872">
    <property type="term" value="F:metal ion binding"/>
    <property type="evidence" value="ECO:0007669"/>
    <property type="project" value="UniProtKB-KW"/>
</dbReference>
<dbReference type="GO" id="GO:0015977">
    <property type="term" value="P:carbon fixation"/>
    <property type="evidence" value="ECO:0007669"/>
    <property type="project" value="UniProtKB-KW"/>
</dbReference>
<dbReference type="GO" id="GO:0015979">
    <property type="term" value="P:photosynthesis"/>
    <property type="evidence" value="ECO:0007669"/>
    <property type="project" value="UniProtKB-KW"/>
</dbReference>
<dbReference type="Gene3D" id="3.30.1330.140">
    <property type="entry name" value="Carboxysome Shell Carbonic Anhydrase, C-terminal domain"/>
    <property type="match status" value="1"/>
</dbReference>
<dbReference type="Gene3D" id="1.20.120.1310">
    <property type="entry name" value="Carboxysome Shell Carbonic Anhydrase, N-terminal helical domain"/>
    <property type="match status" value="1"/>
</dbReference>
<dbReference type="InterPro" id="IPR014074">
    <property type="entry name" value="Carboxysome_shell_carb_anhy"/>
</dbReference>
<dbReference type="InterPro" id="IPR048620">
    <property type="entry name" value="CsoSCA_C"/>
</dbReference>
<dbReference type="InterPro" id="IPR043066">
    <property type="entry name" value="CsoSCA_C_sf"/>
</dbReference>
<dbReference type="InterPro" id="IPR048539">
    <property type="entry name" value="CsoSCA_cat"/>
</dbReference>
<dbReference type="InterPro" id="IPR048619">
    <property type="entry name" value="CsoSCA_N"/>
</dbReference>
<dbReference type="InterPro" id="IPR043065">
    <property type="entry name" value="CsoSCA_N_sf"/>
</dbReference>
<dbReference type="NCBIfam" id="TIGR02701">
    <property type="entry name" value="shell_carb_anhy"/>
    <property type="match status" value="1"/>
</dbReference>
<dbReference type="Pfam" id="PF08936">
    <property type="entry name" value="CsoSCA_C"/>
    <property type="match status" value="1"/>
</dbReference>
<dbReference type="Pfam" id="PF20686">
    <property type="entry name" value="CsoSCA_cat"/>
    <property type="match status" value="1"/>
</dbReference>
<dbReference type="Pfam" id="PF20687">
    <property type="entry name" value="CsoSCA_N"/>
    <property type="match status" value="1"/>
</dbReference>
<protein>
    <recommendedName>
        <fullName evidence="4">Carboxysome shell carbonic anhydrase</fullName>
        <shortName evidence="5">CsoSCA</shortName>
        <ecNumber evidence="2">4.2.1.1</ecNumber>
    </recommendedName>
    <alternativeName>
        <fullName evidence="4">Carbonic anhydrase</fullName>
        <shortName evidence="4">CA</shortName>
    </alternativeName>
    <alternativeName>
        <fullName evidence="4">Carboxysome shell protein CsoS3</fullName>
    </alternativeName>
</protein>
<keyword id="KW-1283">Bacterial microcompartment</keyword>
<keyword id="KW-0120">Carbon dioxide fixation</keyword>
<keyword id="KW-1282">Carboxysome</keyword>
<keyword id="KW-0456">Lyase</keyword>
<keyword id="KW-0479">Metal-binding</keyword>
<keyword id="KW-0602">Photosynthesis</keyword>
<keyword id="KW-0862">Zinc</keyword>
<comment type="function">
    <text evidence="2 3 6">Reversible hydration of carbon dioxide (PubMed:14729686). Essential for photosynthetic carbon dioxide fixation, supplies CO(2) to RuBisCO (ribulose bisphosphate carboxylase, cbbL-cbbS) in the carboxysome (Probable). There are estimated to be 29 CsoSCA oligomers per carboxysome (PubMed:22155772).</text>
</comment>
<comment type="catalytic activity">
    <reaction evidence="2">
        <text>hydrogencarbonate + H(+) = CO2 + H2O</text>
        <dbReference type="Rhea" id="RHEA:10748"/>
        <dbReference type="ChEBI" id="CHEBI:15377"/>
        <dbReference type="ChEBI" id="CHEBI:15378"/>
        <dbReference type="ChEBI" id="CHEBI:16526"/>
        <dbReference type="ChEBI" id="CHEBI:17544"/>
        <dbReference type="EC" id="4.2.1.1"/>
    </reaction>
</comment>
<comment type="cofactor">
    <cofactor evidence="1">
        <name>Zn(2+)</name>
        <dbReference type="ChEBI" id="CHEBI:29105"/>
    </cofactor>
    <text evidence="1">Binds 1 Zn(2+) per monomer.</text>
</comment>
<comment type="biophysicochemical properties">
    <kinetics>
        <text evidence="3">kcat is 8700 sec(-1) at pH 8.5, from purified carboxysomes.</text>
    </kinetics>
</comment>
<comment type="subunit">
    <text evidence="1">Homodimer.</text>
</comment>
<comment type="subcellular location">
    <subcellularLocation>
        <location evidence="3">Carboxysome</location>
    </subcellularLocation>
    <text evidence="3">While the protein is very difficult to identify due to its low abundance, the enzyme activity fractionates with the carboxysome. This cyanobacterium makes alpha-type carboxysomes.</text>
</comment>
<comment type="similarity">
    <text evidence="6">Belongs to the beta-class carbonic anhydrase family. CsoSCA subfamily.</text>
</comment>
<reference key="1">
    <citation type="journal article" date="2003" name="Nature">
        <title>Genome divergence in two Prochlorococcus ecotypes reflects oceanic niche differentiation.</title>
        <authorList>
            <person name="Rocap G."/>
            <person name="Larimer F.W."/>
            <person name="Lamerdin J.E."/>
            <person name="Malfatti S."/>
            <person name="Chain P."/>
            <person name="Ahlgren N.A."/>
            <person name="Arellano A."/>
            <person name="Coleman M."/>
            <person name="Hauser L."/>
            <person name="Hess W.R."/>
            <person name="Johnson Z.I."/>
            <person name="Land M.L."/>
            <person name="Lindell D."/>
            <person name="Post A.F."/>
            <person name="Regala W."/>
            <person name="Shah M."/>
            <person name="Shaw S.L."/>
            <person name="Steglich C."/>
            <person name="Sullivan M.B."/>
            <person name="Ting C.S."/>
            <person name="Tolonen A."/>
            <person name="Webb E.A."/>
            <person name="Zinser E.R."/>
            <person name="Chisholm S.W."/>
        </authorList>
    </citation>
    <scope>NUCLEOTIDE SEQUENCE [LARGE SCALE GENOMIC DNA]</scope>
    <source>
        <strain>CCMP1986 / NIES-2087 / MED4</strain>
    </source>
</reference>
<reference key="2">
    <citation type="journal article" date="2004" name="J. Bacteriol.">
        <title>A novel evolutionary lineage of carbonic anhydrase (epsilon class) is a component of the carboxysome shell.</title>
        <authorList>
            <person name="So A.K."/>
            <person name="Espie G.S."/>
            <person name="Williams E.B."/>
            <person name="Shively J.M."/>
            <person name="Heinhorst S."/>
            <person name="Cannon G.C."/>
        </authorList>
    </citation>
    <scope>FUNCTION AS A CARBONIC ANHYDRASE</scope>
    <scope>CATALYTIC ACTIVITY</scope>
    <source>
        <strain>CCMP1986 / NIES-2087 / MED4</strain>
    </source>
</reference>
<reference key="3">
    <citation type="journal article" date="2012" name="J. Bacteriol.">
        <title>Isolation and characterization of the Prochlorococcus carboxysome reveal the presence of the novel shell protein CsoS1D.</title>
        <authorList>
            <person name="Roberts E.W."/>
            <person name="Cai F."/>
            <person name="Kerfeld C.A."/>
            <person name="Cannon G.C."/>
            <person name="Heinhorst S."/>
        </authorList>
    </citation>
    <scope>FUNCTION</scope>
    <scope>CATALYTIC ACTIVITY</scope>
    <scope>BIOPHYSICOCHEMICAL PROPERTIES</scope>
    <scope>PROTEIN ABUNDANCE</scope>
    <scope>SUBCELLULAR LOCATION</scope>
    <source>
        <strain>CCMP1986 / NIES-2087 / MED4</strain>
    </source>
</reference>
<organism>
    <name type="scientific">Prochlorococcus marinus subsp. pastoris (strain CCMP1986 / NIES-2087 / MED4)</name>
    <dbReference type="NCBI Taxonomy" id="59919"/>
    <lineage>
        <taxon>Bacteria</taxon>
        <taxon>Bacillati</taxon>
        <taxon>Cyanobacteriota</taxon>
        <taxon>Cyanophyceae</taxon>
        <taxon>Synechococcales</taxon>
        <taxon>Prochlorococcaceae</taxon>
        <taxon>Prochlorococcus</taxon>
    </lineage>
</organism>
<sequence length="509" mass="57306">MPLRGLAKAKNFTLGPTAPMKTFTENVHSQNNEINNLKKIDKTHNLTNNSQNEKLYKYESQIKSSFDRIVPTLKEIARIQHHEDFINTAQSISKQNLGINLPTHILDKSWVKPLDMRALYAWCAFKQHEKLSDNFFENDPLEGSFGSPNANNFETALLDCGIHLLDITPCSDGRLAHSVAYVMRIPFSAVRRRSHAGALFDIENTVNRWVKTEHKRYRENNPNEAHEDTRYLKIVTYHFSSVDPLHQGCAAHGSDDKLAAKEGSEKLLAFKEAVENSFCCGASVDLMLIGLDTDTDSLKIHLSSSDGKIDLENTISSLDIYNSTINFSKDEAEKEICQIISGNSNKVQLKGLDKFVYKLIVNNISQIDYVKKFHKGSYEDIGHAERFIGVGIGFKEVHLRNLTYFAHLDTVEEGAPDLDVGVKIFTGLNVSQDLPIPIVIRFDYSGKVPGAKERAAKDCYRVNNAISIRYKSLVDKGLLHTCLTIRDRDNIHSAQIIGMSLDQKTKEAH</sequence>
<name>CSOCA_PROMP</name>
<evidence type="ECO:0000250" key="1">
    <source>
        <dbReference type="UniProtKB" id="O85042"/>
    </source>
</evidence>
<evidence type="ECO:0000269" key="2">
    <source>
    </source>
</evidence>
<evidence type="ECO:0000269" key="3">
    <source>
    </source>
</evidence>
<evidence type="ECO:0000303" key="4">
    <source>
    </source>
</evidence>
<evidence type="ECO:0000303" key="5">
    <source>
    </source>
</evidence>
<evidence type="ECO:0000305" key="6">
    <source>
    </source>
</evidence>
<proteinExistence type="evidence at protein level"/>
<accession>Q7V2C7</accession>
<feature type="chain" id="PRO_0000452065" description="Carboxysome shell carbonic anhydrase">
    <location>
        <begin position="1"/>
        <end position="509"/>
    </location>
</feature>
<feature type="active site" description="Proton acceptor" evidence="1">
    <location>
        <position position="172"/>
    </location>
</feature>
<feature type="binding site" evidence="1">
    <location>
        <position position="170"/>
    </location>
    <ligand>
        <name>Zn(2+)</name>
        <dbReference type="ChEBI" id="CHEBI:29105"/>
        <note>catalytic</note>
    </ligand>
</feature>
<feature type="binding site" evidence="1">
    <location>
        <position position="238"/>
    </location>
    <ligand>
        <name>Zn(2+)</name>
        <dbReference type="ChEBI" id="CHEBI:29105"/>
        <note>catalytic</note>
    </ligand>
</feature>
<feature type="binding site" evidence="1">
    <location>
        <position position="249"/>
    </location>
    <ligand>
        <name>Zn(2+)</name>
        <dbReference type="ChEBI" id="CHEBI:29105"/>
        <note>catalytic</note>
    </ligand>
</feature>
<gene>
    <name evidence="4" type="primary">csoS3</name>
    <name type="ordered locus">PMM0553</name>
</gene>